<name>ACCD_STRMK</name>
<keyword id="KW-0067">ATP-binding</keyword>
<keyword id="KW-0963">Cytoplasm</keyword>
<keyword id="KW-0275">Fatty acid biosynthesis</keyword>
<keyword id="KW-0276">Fatty acid metabolism</keyword>
<keyword id="KW-0444">Lipid biosynthesis</keyword>
<keyword id="KW-0443">Lipid metabolism</keyword>
<keyword id="KW-0479">Metal-binding</keyword>
<keyword id="KW-0547">Nucleotide-binding</keyword>
<keyword id="KW-1185">Reference proteome</keyword>
<keyword id="KW-0808">Transferase</keyword>
<keyword id="KW-0862">Zinc</keyword>
<keyword id="KW-0863">Zinc-finger</keyword>
<gene>
    <name evidence="1" type="primary">accD</name>
    <name type="ordered locus">Smlt3415</name>
</gene>
<protein>
    <recommendedName>
        <fullName evidence="1">Acetyl-coenzyme A carboxylase carboxyl transferase subunit beta</fullName>
        <shortName evidence="1">ACCase subunit beta</shortName>
        <shortName evidence="1">Acetyl-CoA carboxylase carboxyltransferase subunit beta</shortName>
        <ecNumber evidence="1">2.1.3.15</ecNumber>
    </recommendedName>
</protein>
<feature type="chain" id="PRO_0000359070" description="Acetyl-coenzyme A carboxylase carboxyl transferase subunit beta">
    <location>
        <begin position="1"/>
        <end position="291"/>
    </location>
</feature>
<feature type="domain" description="CoA carboxyltransferase N-terminal" evidence="2">
    <location>
        <begin position="28"/>
        <end position="291"/>
    </location>
</feature>
<feature type="zinc finger region" description="C4-type" evidence="1">
    <location>
        <begin position="32"/>
        <end position="54"/>
    </location>
</feature>
<feature type="region of interest" description="Disordered" evidence="3">
    <location>
        <begin position="1"/>
        <end position="23"/>
    </location>
</feature>
<feature type="binding site" evidence="1">
    <location>
        <position position="32"/>
    </location>
    <ligand>
        <name>Zn(2+)</name>
        <dbReference type="ChEBI" id="CHEBI:29105"/>
    </ligand>
</feature>
<feature type="binding site" evidence="1">
    <location>
        <position position="35"/>
    </location>
    <ligand>
        <name>Zn(2+)</name>
        <dbReference type="ChEBI" id="CHEBI:29105"/>
    </ligand>
</feature>
<feature type="binding site" evidence="1">
    <location>
        <position position="51"/>
    </location>
    <ligand>
        <name>Zn(2+)</name>
        <dbReference type="ChEBI" id="CHEBI:29105"/>
    </ligand>
</feature>
<feature type="binding site" evidence="1">
    <location>
        <position position="54"/>
    </location>
    <ligand>
        <name>Zn(2+)</name>
        <dbReference type="ChEBI" id="CHEBI:29105"/>
    </ligand>
</feature>
<evidence type="ECO:0000255" key="1">
    <source>
        <dbReference type="HAMAP-Rule" id="MF_01395"/>
    </source>
</evidence>
<evidence type="ECO:0000255" key="2">
    <source>
        <dbReference type="PROSITE-ProRule" id="PRU01136"/>
    </source>
</evidence>
<evidence type="ECO:0000256" key="3">
    <source>
        <dbReference type="SAM" id="MobiDB-lite"/>
    </source>
</evidence>
<evidence type="ECO:0000305" key="4"/>
<accession>B2FNY8</accession>
<sequence length="291" mass="31677">MSWLSKLMPSGIRTDNTPSKKRSVPEGLWEKCSNCGSALYRPELEENLEVCPKCGHHMAIRARARLAALFDADSTTEIGARLGPTDLLKFKDQKKYSERIKIAQKNTGEYDALIAMRGLLKGRALVASSFDFAFMGGSMGSVVGERFALAAETAVEIGAPYVCFSQSGGARMQEGLFSLMQMAKTSAALGKLRETGLPYISVLTHPTTGGVSASFAMLGDINIAEPQALIGFAGPRVIEQTVREKLPEGFQRSEFLLEHGAIDQICDRREMRDRLSDLLAMLGRQPAPEVA</sequence>
<organism>
    <name type="scientific">Stenotrophomonas maltophilia (strain K279a)</name>
    <dbReference type="NCBI Taxonomy" id="522373"/>
    <lineage>
        <taxon>Bacteria</taxon>
        <taxon>Pseudomonadati</taxon>
        <taxon>Pseudomonadota</taxon>
        <taxon>Gammaproteobacteria</taxon>
        <taxon>Lysobacterales</taxon>
        <taxon>Lysobacteraceae</taxon>
        <taxon>Stenotrophomonas</taxon>
        <taxon>Stenotrophomonas maltophilia group</taxon>
    </lineage>
</organism>
<reference key="1">
    <citation type="journal article" date="2008" name="Genome Biol.">
        <title>The complete genome, comparative and functional analysis of Stenotrophomonas maltophilia reveals an organism heavily shielded by drug resistance determinants.</title>
        <authorList>
            <person name="Crossman L.C."/>
            <person name="Gould V.C."/>
            <person name="Dow J.M."/>
            <person name="Vernikos G.S."/>
            <person name="Okazaki A."/>
            <person name="Sebaihia M."/>
            <person name="Saunders D."/>
            <person name="Arrowsmith C."/>
            <person name="Carver T."/>
            <person name="Peters N."/>
            <person name="Adlem E."/>
            <person name="Kerhornou A."/>
            <person name="Lord A."/>
            <person name="Murphy L."/>
            <person name="Seeger K."/>
            <person name="Squares R."/>
            <person name="Rutter S."/>
            <person name="Quail M.A."/>
            <person name="Rajandream M.A."/>
            <person name="Harris D."/>
            <person name="Churcher C."/>
            <person name="Bentley S.D."/>
            <person name="Parkhill J."/>
            <person name="Thomson N.R."/>
            <person name="Avison M.B."/>
        </authorList>
    </citation>
    <scope>NUCLEOTIDE SEQUENCE [LARGE SCALE GENOMIC DNA]</scope>
    <source>
        <strain>K279a</strain>
    </source>
</reference>
<comment type="function">
    <text evidence="1">Component of the acetyl coenzyme A carboxylase (ACC) complex. Biotin carboxylase (BC) catalyzes the carboxylation of biotin on its carrier protein (BCCP) and then the CO(2) group is transferred by the transcarboxylase to acetyl-CoA to form malonyl-CoA.</text>
</comment>
<comment type="catalytic activity">
    <reaction evidence="1">
        <text>N(6)-carboxybiotinyl-L-lysyl-[protein] + acetyl-CoA = N(6)-biotinyl-L-lysyl-[protein] + malonyl-CoA</text>
        <dbReference type="Rhea" id="RHEA:54728"/>
        <dbReference type="Rhea" id="RHEA-COMP:10505"/>
        <dbReference type="Rhea" id="RHEA-COMP:10506"/>
        <dbReference type="ChEBI" id="CHEBI:57288"/>
        <dbReference type="ChEBI" id="CHEBI:57384"/>
        <dbReference type="ChEBI" id="CHEBI:83144"/>
        <dbReference type="ChEBI" id="CHEBI:83145"/>
        <dbReference type="EC" id="2.1.3.15"/>
    </reaction>
</comment>
<comment type="cofactor">
    <cofactor evidence="1">
        <name>Zn(2+)</name>
        <dbReference type="ChEBI" id="CHEBI:29105"/>
    </cofactor>
    <text evidence="1">Binds 1 zinc ion per subunit.</text>
</comment>
<comment type="pathway">
    <text evidence="1">Lipid metabolism; malonyl-CoA biosynthesis; malonyl-CoA from acetyl-CoA: step 1/1.</text>
</comment>
<comment type="subunit">
    <text evidence="1">Acetyl-CoA carboxylase is a heterohexamer composed of biotin carboxyl carrier protein (AccB), biotin carboxylase (AccC) and two subunits each of ACCase subunit alpha (AccA) and ACCase subunit beta (AccD).</text>
</comment>
<comment type="subcellular location">
    <subcellularLocation>
        <location evidence="1">Cytoplasm</location>
    </subcellularLocation>
</comment>
<comment type="similarity">
    <text evidence="1">Belongs to the AccD/PCCB family.</text>
</comment>
<comment type="sequence caution" evidence="4">
    <conflict type="erroneous initiation">
        <sequence resource="EMBL-CDS" id="CAQ46842"/>
    </conflict>
    <text>Extended N-terminus.</text>
</comment>
<proteinExistence type="inferred from homology"/>
<dbReference type="EC" id="2.1.3.15" evidence="1"/>
<dbReference type="EMBL" id="AM743169">
    <property type="protein sequence ID" value="CAQ46842.1"/>
    <property type="status" value="ALT_INIT"/>
    <property type="molecule type" value="Genomic_DNA"/>
</dbReference>
<dbReference type="RefSeq" id="WP_044570654.1">
    <property type="nucleotide sequence ID" value="NC_010943.1"/>
</dbReference>
<dbReference type="SMR" id="B2FNY8"/>
<dbReference type="EnsemblBacteria" id="CAQ46842">
    <property type="protein sequence ID" value="CAQ46842"/>
    <property type="gene ID" value="Smlt3415"/>
</dbReference>
<dbReference type="KEGG" id="sml:Smlt3415"/>
<dbReference type="PATRIC" id="fig|522373.3.peg.3203"/>
<dbReference type="eggNOG" id="COG0777">
    <property type="taxonomic scope" value="Bacteria"/>
</dbReference>
<dbReference type="HOGENOM" id="CLU_015486_1_0_6"/>
<dbReference type="UniPathway" id="UPA00655">
    <property type="reaction ID" value="UER00711"/>
</dbReference>
<dbReference type="Proteomes" id="UP000008840">
    <property type="component" value="Chromosome"/>
</dbReference>
<dbReference type="GO" id="GO:0009329">
    <property type="term" value="C:acetate CoA-transferase complex"/>
    <property type="evidence" value="ECO:0007669"/>
    <property type="project" value="TreeGrafter"/>
</dbReference>
<dbReference type="GO" id="GO:0003989">
    <property type="term" value="F:acetyl-CoA carboxylase activity"/>
    <property type="evidence" value="ECO:0007669"/>
    <property type="project" value="InterPro"/>
</dbReference>
<dbReference type="GO" id="GO:0005524">
    <property type="term" value="F:ATP binding"/>
    <property type="evidence" value="ECO:0007669"/>
    <property type="project" value="UniProtKB-KW"/>
</dbReference>
<dbReference type="GO" id="GO:0016743">
    <property type="term" value="F:carboxyl- or carbamoyltransferase activity"/>
    <property type="evidence" value="ECO:0007669"/>
    <property type="project" value="UniProtKB-UniRule"/>
</dbReference>
<dbReference type="GO" id="GO:0008270">
    <property type="term" value="F:zinc ion binding"/>
    <property type="evidence" value="ECO:0007669"/>
    <property type="project" value="UniProtKB-UniRule"/>
</dbReference>
<dbReference type="GO" id="GO:0006633">
    <property type="term" value="P:fatty acid biosynthetic process"/>
    <property type="evidence" value="ECO:0007669"/>
    <property type="project" value="UniProtKB-KW"/>
</dbReference>
<dbReference type="GO" id="GO:2001295">
    <property type="term" value="P:malonyl-CoA biosynthetic process"/>
    <property type="evidence" value="ECO:0007669"/>
    <property type="project" value="UniProtKB-UniRule"/>
</dbReference>
<dbReference type="Gene3D" id="3.90.226.10">
    <property type="entry name" value="2-enoyl-CoA Hydratase, Chain A, domain 1"/>
    <property type="match status" value="1"/>
</dbReference>
<dbReference type="HAMAP" id="MF_01395">
    <property type="entry name" value="AcetylCoA_CT_beta"/>
    <property type="match status" value="1"/>
</dbReference>
<dbReference type="InterPro" id="IPR034733">
    <property type="entry name" value="AcCoA_carboxyl_beta"/>
</dbReference>
<dbReference type="InterPro" id="IPR000438">
    <property type="entry name" value="Acetyl_CoA_COase_Trfase_b_su"/>
</dbReference>
<dbReference type="InterPro" id="IPR029045">
    <property type="entry name" value="ClpP/crotonase-like_dom_sf"/>
</dbReference>
<dbReference type="InterPro" id="IPR011762">
    <property type="entry name" value="COA_CT_N"/>
</dbReference>
<dbReference type="InterPro" id="IPR041010">
    <property type="entry name" value="Znf-ACC"/>
</dbReference>
<dbReference type="NCBIfam" id="TIGR00515">
    <property type="entry name" value="accD"/>
    <property type="match status" value="1"/>
</dbReference>
<dbReference type="PANTHER" id="PTHR42995">
    <property type="entry name" value="ACETYL-COENZYME A CARBOXYLASE CARBOXYL TRANSFERASE SUBUNIT BETA, CHLOROPLASTIC"/>
    <property type="match status" value="1"/>
</dbReference>
<dbReference type="PANTHER" id="PTHR42995:SF5">
    <property type="entry name" value="ACETYL-COENZYME A CARBOXYLASE CARBOXYL TRANSFERASE SUBUNIT BETA, CHLOROPLASTIC"/>
    <property type="match status" value="1"/>
</dbReference>
<dbReference type="Pfam" id="PF01039">
    <property type="entry name" value="Carboxyl_trans"/>
    <property type="match status" value="1"/>
</dbReference>
<dbReference type="Pfam" id="PF17848">
    <property type="entry name" value="Zn_ribbon_ACC"/>
    <property type="match status" value="1"/>
</dbReference>
<dbReference type="PRINTS" id="PR01070">
    <property type="entry name" value="ACCCTRFRASEB"/>
</dbReference>
<dbReference type="SUPFAM" id="SSF52096">
    <property type="entry name" value="ClpP/crotonase"/>
    <property type="match status" value="1"/>
</dbReference>
<dbReference type="PROSITE" id="PS50980">
    <property type="entry name" value="COA_CT_NTER"/>
    <property type="match status" value="1"/>
</dbReference>